<reference key="1">
    <citation type="thesis" date="1994" institute="University of Ghent" country="Belgium">
        <authorList>
            <person name="Niebel A."/>
        </authorList>
    </citation>
    <scope>NUCLEOTIDE SEQUENCE [MRNA]</scope>
    <source>
        <strain>cv. Bintje</strain>
        <tissue>Root</tissue>
    </source>
</reference>
<reference key="2">
    <citation type="submission" date="2005-09" db="EMBL/GenBank/DDBJ databases">
        <title>Full length sequences from Solanum tuberosum cv. Kuras.</title>
        <authorList>
            <person name="Nielsen K.L."/>
            <person name="Welinder K.G."/>
            <person name="Nielsen H.V."/>
            <person name="Emmersen J.M.G."/>
        </authorList>
    </citation>
    <scope>NUCLEOTIDE SEQUENCE [LARGE SCALE MRNA]</scope>
    <source>
        <strain>cv. Kuras</strain>
    </source>
</reference>
<reference key="3">
    <citation type="journal article" date="2011" name="Nature">
        <title>Genome sequence and analysis of the tuber crop potato.</title>
        <authorList>
            <consortium name="The Potato Genome Sequencing Consortium"/>
        </authorList>
    </citation>
    <scope>NUCLEOTIDE SEQUENCE [LARGE SCALE GENOMIC DNA]</scope>
    <source>
        <strain>cv. DM1-3 516 R44</strain>
    </source>
</reference>
<keyword id="KW-0106">Calcium</keyword>
<keyword id="KW-0963">Cytoplasm</keyword>
<keyword id="KW-1185">Reference proteome</keyword>
<sequence length="168" mass="18846">MLVYQDLLTGDELLSDSFPYKEIQNGMLWEVQGKWVVQGAVDVNIGANPSAEGGGEDEGVDDQAVKVVDIVDTFRLQEQPAFDKKQFVTYIKRYIKNLTPKLEGEAQEAFKKNIESATKFLLSKLKDFQFFVGEGMHDDSALVFAYYKDGSADPTFLYLAPGLKEIKC</sequence>
<feature type="chain" id="PRO_0000211307" description="Translationally-controlled tumor protein homolog">
    <location>
        <begin position="1"/>
        <end position="168"/>
    </location>
</feature>
<feature type="domain" description="TCTP" evidence="2">
    <location>
        <begin position="1"/>
        <end position="168"/>
    </location>
</feature>
<feature type="sequence conflict" description="In Ref. 1; CAA85519." evidence="3" ref="1">
    <original>K</original>
    <variation>T</variation>
    <location>
        <position position="21"/>
    </location>
</feature>
<feature type="sequence conflict" description="In Ref. 1; CAA85519." evidence="3" ref="1">
    <original>Q</original>
    <variation>H</variation>
    <location>
        <position position="32"/>
    </location>
</feature>
<feature type="sequence conflict" description="In Ref. 1; CAA85519." evidence="3" ref="1">
    <original>Q</original>
    <variation>H</variation>
    <location>
        <position position="38"/>
    </location>
</feature>
<feature type="sequence conflict" description="In Ref. 1; CAA85519." evidence="3" ref="1">
    <original>N</original>
    <variation>S</variation>
    <location>
        <position position="97"/>
    </location>
</feature>
<feature type="sequence conflict" description="In Ref. 1; CAA85519." evidence="3" ref="1">
    <original>K</original>
    <variation>E</variation>
    <location>
        <position position="112"/>
    </location>
</feature>
<organism>
    <name type="scientific">Solanum tuberosum</name>
    <name type="common">Potato</name>
    <dbReference type="NCBI Taxonomy" id="4113"/>
    <lineage>
        <taxon>Eukaryota</taxon>
        <taxon>Viridiplantae</taxon>
        <taxon>Streptophyta</taxon>
        <taxon>Embryophyta</taxon>
        <taxon>Tracheophyta</taxon>
        <taxon>Spermatophyta</taxon>
        <taxon>Magnoliopsida</taxon>
        <taxon>eudicotyledons</taxon>
        <taxon>Gunneridae</taxon>
        <taxon>Pentapetalae</taxon>
        <taxon>asterids</taxon>
        <taxon>lamiids</taxon>
        <taxon>Solanales</taxon>
        <taxon>Solanaceae</taxon>
        <taxon>Solanoideae</taxon>
        <taxon>Solaneae</taxon>
        <taxon>Solanum</taxon>
    </lineage>
</organism>
<protein>
    <recommendedName>
        <fullName>Translationally-controlled tumor protein homolog</fullName>
        <shortName>TCTP</shortName>
    </recommendedName>
    <alternativeName>
        <fullName>p23</fullName>
    </alternativeName>
</protein>
<comment type="function">
    <text evidence="1">Involved in calcium binding and microtubule stabilization.</text>
</comment>
<comment type="subcellular location">
    <subcellularLocation>
        <location evidence="1">Cytoplasm</location>
    </subcellularLocation>
</comment>
<comment type="similarity">
    <text evidence="2">Belongs to the TCTP family.</text>
</comment>
<evidence type="ECO:0000250" key="1"/>
<evidence type="ECO:0000255" key="2">
    <source>
        <dbReference type="PROSITE-ProRule" id="PRU01133"/>
    </source>
</evidence>
<evidence type="ECO:0000305" key="3"/>
<dbReference type="EMBL" id="Z37160">
    <property type="protein sequence ID" value="CAA85519.1"/>
    <property type="molecule type" value="mRNA"/>
</dbReference>
<dbReference type="EMBL" id="DQ207879">
    <property type="protein sequence ID" value="ABA81887.1"/>
    <property type="molecule type" value="mRNA"/>
</dbReference>
<dbReference type="EMBL" id="DQ235166">
    <property type="protein sequence ID" value="ABB29923.1"/>
    <property type="molecule type" value="mRNA"/>
</dbReference>
<dbReference type="EMBL" id="DQ241847">
    <property type="protein sequence ID" value="ABB87118.1"/>
    <property type="molecule type" value="mRNA"/>
</dbReference>
<dbReference type="PIR" id="A38959">
    <property type="entry name" value="A38959"/>
</dbReference>
<dbReference type="RefSeq" id="NP_001275182.1">
    <property type="nucleotide sequence ID" value="NM_001288253.1"/>
</dbReference>
<dbReference type="SMR" id="P43349"/>
<dbReference type="FunCoup" id="P43349">
    <property type="interactions" value="2552"/>
</dbReference>
<dbReference type="STRING" id="4113.P43349"/>
<dbReference type="PaxDb" id="4113-PGSC0003DMT400063575"/>
<dbReference type="EnsemblPlants" id="PGSC0003DMT400063576">
    <property type="protein sequence ID" value="PGSC0003DMT400063576"/>
    <property type="gene ID" value="PGSC0003DMG400024716"/>
</dbReference>
<dbReference type="EnsemblPlants" id="PGSC0003DMT400063579">
    <property type="protein sequence ID" value="PGSC0003DMT400063579"/>
    <property type="gene ID" value="PGSC0003DMG400024716"/>
</dbReference>
<dbReference type="EnsemblPlants" id="PGSC0003DMT400063580">
    <property type="protein sequence ID" value="PGSC0003DMT400063580"/>
    <property type="gene ID" value="PGSC0003DMG400024716"/>
</dbReference>
<dbReference type="GeneID" id="102577554"/>
<dbReference type="Gramene" id="PGSC0003DMT400063576">
    <property type="protein sequence ID" value="PGSC0003DMT400063576"/>
    <property type="gene ID" value="PGSC0003DMG400024716"/>
</dbReference>
<dbReference type="Gramene" id="PGSC0003DMT400063579">
    <property type="protein sequence ID" value="PGSC0003DMT400063579"/>
    <property type="gene ID" value="PGSC0003DMG400024716"/>
</dbReference>
<dbReference type="Gramene" id="PGSC0003DMT400063580">
    <property type="protein sequence ID" value="PGSC0003DMT400063580"/>
    <property type="gene ID" value="PGSC0003DMG400024716"/>
</dbReference>
<dbReference type="KEGG" id="sot:102577554"/>
<dbReference type="KEGG" id="sot:102581045"/>
<dbReference type="eggNOG" id="KOG1727">
    <property type="taxonomic scope" value="Eukaryota"/>
</dbReference>
<dbReference type="HOGENOM" id="CLU_095877_1_1_1"/>
<dbReference type="InParanoid" id="P43349"/>
<dbReference type="OMA" id="CAMITEG"/>
<dbReference type="OrthoDB" id="10248936at2759"/>
<dbReference type="Proteomes" id="UP000011115">
    <property type="component" value="Unassembled WGS sequence"/>
</dbReference>
<dbReference type="ExpressionAtlas" id="P43349">
    <property type="expression patterns" value="baseline"/>
</dbReference>
<dbReference type="GO" id="GO:0005737">
    <property type="term" value="C:cytoplasm"/>
    <property type="evidence" value="ECO:0000318"/>
    <property type="project" value="GO_Central"/>
</dbReference>
<dbReference type="GO" id="GO:0005509">
    <property type="term" value="F:calcium ion binding"/>
    <property type="evidence" value="ECO:0000318"/>
    <property type="project" value="GO_Central"/>
</dbReference>
<dbReference type="FunFam" id="2.170.150.10:FF:000003">
    <property type="entry name" value="Translationally-controlled tumor protein homolog"/>
    <property type="match status" value="1"/>
</dbReference>
<dbReference type="Gene3D" id="2.170.150.10">
    <property type="entry name" value="Metal Binding Protein, Guanine Nucleotide Exchange Factor, Chain A"/>
    <property type="match status" value="1"/>
</dbReference>
<dbReference type="InterPro" id="IPR011057">
    <property type="entry name" value="Mss4-like_sf"/>
</dbReference>
<dbReference type="InterPro" id="IPR011323">
    <property type="entry name" value="Mss4/transl-control_tumour"/>
</dbReference>
<dbReference type="InterPro" id="IPR034737">
    <property type="entry name" value="TCTP"/>
</dbReference>
<dbReference type="InterPro" id="IPR018103">
    <property type="entry name" value="Translation_control_tumour_CS"/>
</dbReference>
<dbReference type="InterPro" id="IPR018105">
    <property type="entry name" value="Translational_control_tumour_p"/>
</dbReference>
<dbReference type="PANTHER" id="PTHR11991">
    <property type="entry name" value="TRANSLATIONALLY CONTROLLED TUMOR PROTEIN-RELATED"/>
    <property type="match status" value="1"/>
</dbReference>
<dbReference type="PANTHER" id="PTHR11991:SF0">
    <property type="entry name" value="TRANSLATIONALLY-CONTROLLED TUMOR PROTEIN"/>
    <property type="match status" value="1"/>
</dbReference>
<dbReference type="Pfam" id="PF00838">
    <property type="entry name" value="TCTP"/>
    <property type="match status" value="1"/>
</dbReference>
<dbReference type="PRINTS" id="PR01653">
    <property type="entry name" value="TCTPROTEIN"/>
</dbReference>
<dbReference type="SUPFAM" id="SSF51316">
    <property type="entry name" value="Mss4-like"/>
    <property type="match status" value="1"/>
</dbReference>
<dbReference type="PROSITE" id="PS01002">
    <property type="entry name" value="TCTP_1"/>
    <property type="match status" value="1"/>
</dbReference>
<dbReference type="PROSITE" id="PS01003">
    <property type="entry name" value="TCTP_2"/>
    <property type="match status" value="1"/>
</dbReference>
<dbReference type="PROSITE" id="PS51797">
    <property type="entry name" value="TCTP_3"/>
    <property type="match status" value="1"/>
</dbReference>
<gene>
    <name type="primary">TCTP</name>
</gene>
<accession>P43349</accession>
<accession>Q38M45</accession>
<proteinExistence type="evidence at transcript level"/>
<name>TCTP_SOLTU</name>